<dbReference type="EMBL" id="BX571857">
    <property type="protein sequence ID" value="CAG42866.1"/>
    <property type="molecule type" value="Genomic_DNA"/>
</dbReference>
<dbReference type="RefSeq" id="WP_000791580.1">
    <property type="nucleotide sequence ID" value="NC_002953.3"/>
</dbReference>
<dbReference type="SMR" id="Q6GA57"/>
<dbReference type="ABCD" id="Q6GA57">
    <property type="antibodies" value="1 sequenced antibody"/>
</dbReference>
<dbReference type="KEGG" id="sas:SAS1091"/>
<dbReference type="HOGENOM" id="CLU_136810_0_0_9"/>
<dbReference type="PRO" id="PR:Q6GA57"/>
<dbReference type="GO" id="GO:0005615">
    <property type="term" value="C:extracellular space"/>
    <property type="evidence" value="ECO:0007669"/>
    <property type="project" value="InterPro"/>
</dbReference>
<dbReference type="GO" id="GO:0001848">
    <property type="term" value="F:complement binding"/>
    <property type="evidence" value="ECO:0007669"/>
    <property type="project" value="InterPro"/>
</dbReference>
<dbReference type="Gene3D" id="1.10.10.1270">
    <property type="entry name" value="Sbi, C3 binding domain IV"/>
    <property type="match status" value="1"/>
</dbReference>
<dbReference type="InterPro" id="IPR036233">
    <property type="entry name" value="Efb_C_sf"/>
</dbReference>
<dbReference type="InterPro" id="IPR021033">
    <property type="entry name" value="Extracellular_fibrinogen-bd_C"/>
</dbReference>
<dbReference type="InterPro" id="IPR041909">
    <property type="entry name" value="Sbi_C3_db_domIV"/>
</dbReference>
<dbReference type="Pfam" id="PF12199">
    <property type="entry name" value="efb-c"/>
    <property type="match status" value="1"/>
</dbReference>
<dbReference type="SUPFAM" id="SSF158366">
    <property type="entry name" value="Efb C-domain-like"/>
    <property type="match status" value="1"/>
</dbReference>
<keyword id="KW-0964">Secreted</keyword>
<keyword id="KW-0732">Signal</keyword>
<keyword id="KW-0843">Virulence</keyword>
<reference key="1">
    <citation type="journal article" date="2004" name="Proc. Natl. Acad. Sci. U.S.A.">
        <title>Complete genomes of two clinical Staphylococcus aureus strains: evidence for the rapid evolution of virulence and drug resistance.</title>
        <authorList>
            <person name="Holden M.T.G."/>
            <person name="Feil E.J."/>
            <person name="Lindsay J.A."/>
            <person name="Peacock S.J."/>
            <person name="Day N.P.J."/>
            <person name="Enright M.C."/>
            <person name="Foster T.J."/>
            <person name="Moore C.E."/>
            <person name="Hurst L."/>
            <person name="Atkin R."/>
            <person name="Barron A."/>
            <person name="Bason N."/>
            <person name="Bentley S.D."/>
            <person name="Chillingworth C."/>
            <person name="Chillingworth T."/>
            <person name="Churcher C."/>
            <person name="Clark L."/>
            <person name="Corton C."/>
            <person name="Cronin A."/>
            <person name="Doggett J."/>
            <person name="Dowd L."/>
            <person name="Feltwell T."/>
            <person name="Hance Z."/>
            <person name="Harris B."/>
            <person name="Hauser H."/>
            <person name="Holroyd S."/>
            <person name="Jagels K."/>
            <person name="James K.D."/>
            <person name="Lennard N."/>
            <person name="Line A."/>
            <person name="Mayes R."/>
            <person name="Moule S."/>
            <person name="Mungall K."/>
            <person name="Ormond D."/>
            <person name="Quail M.A."/>
            <person name="Rabbinowitsch E."/>
            <person name="Rutherford K.M."/>
            <person name="Sanders M."/>
            <person name="Sharp S."/>
            <person name="Simmonds M."/>
            <person name="Stevens K."/>
            <person name="Whitehead S."/>
            <person name="Barrell B.G."/>
            <person name="Spratt B.G."/>
            <person name="Parkhill J."/>
        </authorList>
    </citation>
    <scope>NUCLEOTIDE SEQUENCE [LARGE SCALE GENOMIC DNA]</scope>
    <source>
        <strain>MSSA476</strain>
    </source>
</reference>
<organism>
    <name type="scientific">Staphylococcus aureus (strain MSSA476)</name>
    <dbReference type="NCBI Taxonomy" id="282459"/>
    <lineage>
        <taxon>Bacteria</taxon>
        <taxon>Bacillati</taxon>
        <taxon>Bacillota</taxon>
        <taxon>Bacilli</taxon>
        <taxon>Bacillales</taxon>
        <taxon>Staphylococcaceae</taxon>
        <taxon>Staphylococcus</taxon>
    </lineage>
</organism>
<proteinExistence type="inferred from homology"/>
<comment type="function">
    <text evidence="2">Extracellular fibrinogen-binding protein that plays an important role in virulence. By interacting with the alpha chain of fibrinogen and its derivative fibrin, enhances a non-functional interaction between fibrinogen and platelets and is responsible for repression of fibrinogen-dependent platelet aggregation. In addition, assembles a fibrinogen protective shield around the bacteria which results in impaired phagocytic clearance by the host. Mechanistically, interacts with host complement C3b deposited on the surface of the bacterium via its C-terminal and then recruits fibrinogen via its N-terminal.</text>
</comment>
<comment type="subunit">
    <text evidence="2">Interacts with host fibrinogen alpha chain/FGA. Interacts with host complement protein C3.</text>
</comment>
<comment type="subcellular location">
    <subcellularLocation>
        <location evidence="2">Secreted</location>
    </subcellularLocation>
</comment>
<feature type="signal peptide" evidence="1">
    <location>
        <begin position="1"/>
        <end position="29"/>
    </location>
</feature>
<feature type="chain" id="PRO_0000021261" description="Fibrinogen-binding protein">
    <location>
        <begin position="30"/>
        <end position="165"/>
    </location>
</feature>
<sequence>MKNKLIAKSLLTIAAIGITTTTIASTADASEGYGPREKKPVSINHNIVEYNDGTFKYQSRPKFNSTPKYIKFKHDYNILEFNDGTFEYGARPQFNKPAAKTDATIKKEQKLIQAQNLVREFEKTHTVSAHRKAQKAVNLVSFEYKVKKMVLQERIDNVLKQGLVK</sequence>
<name>FIB_STAAS</name>
<gene>
    <name type="primary">fib</name>
    <name type="synonym">efb</name>
    <name type="ordered locus">SAS1091</name>
</gene>
<evidence type="ECO:0000250" key="1"/>
<evidence type="ECO:0000250" key="2">
    <source>
        <dbReference type="UniProtKB" id="A6QG59"/>
    </source>
</evidence>
<accession>Q6GA57</accession>
<protein>
    <recommendedName>
        <fullName>Fibrinogen-binding protein</fullName>
    </recommendedName>
</protein>